<sequence length="217" mass="24019">MSFVPREAVEQAVKEALEISPKRNFKQSVDLIVVLRDIDLRSPQGRIREVVILPHPPKKHVRICVAADGDMAVKAKEVADRVLTREELQGLVGNRKAAKKIAEFCDWVIVKADLMPLVGRTLAPALGPRGKVPIPVPPNANIAEIVKTYRSAVMLRAKDQPQVMCRVGTEDMPVNEIVDNIFKVLSTLEGKLPNARHNIAKVIVKLTMGPPVEVKLR</sequence>
<protein>
    <recommendedName>
        <fullName evidence="1">Large ribosomal subunit protein uL1</fullName>
    </recommendedName>
    <alternativeName>
        <fullName evidence="2">50S ribosomal protein L1</fullName>
    </alternativeName>
</protein>
<dbReference type="EMBL" id="CP000493">
    <property type="protein sequence ID" value="ABM81425.1"/>
    <property type="molecule type" value="Genomic_DNA"/>
</dbReference>
<dbReference type="RefSeq" id="WP_011822743.1">
    <property type="nucleotide sequence ID" value="NC_008818.1"/>
</dbReference>
<dbReference type="SMR" id="A2BN64"/>
<dbReference type="STRING" id="415426.Hbut_1606"/>
<dbReference type="EnsemblBacteria" id="ABM81425">
    <property type="protein sequence ID" value="ABM81425"/>
    <property type="gene ID" value="Hbut_1606"/>
</dbReference>
<dbReference type="GeneID" id="4781884"/>
<dbReference type="KEGG" id="hbu:Hbut_1606"/>
<dbReference type="eggNOG" id="arCOG04289">
    <property type="taxonomic scope" value="Archaea"/>
</dbReference>
<dbReference type="HOGENOM" id="CLU_062853_4_0_2"/>
<dbReference type="OrthoDB" id="10382at2157"/>
<dbReference type="Proteomes" id="UP000002593">
    <property type="component" value="Chromosome"/>
</dbReference>
<dbReference type="GO" id="GO:0015934">
    <property type="term" value="C:large ribosomal subunit"/>
    <property type="evidence" value="ECO:0007669"/>
    <property type="project" value="InterPro"/>
</dbReference>
<dbReference type="GO" id="GO:0019843">
    <property type="term" value="F:rRNA binding"/>
    <property type="evidence" value="ECO:0007669"/>
    <property type="project" value="UniProtKB-UniRule"/>
</dbReference>
<dbReference type="GO" id="GO:0003735">
    <property type="term" value="F:structural constituent of ribosome"/>
    <property type="evidence" value="ECO:0007669"/>
    <property type="project" value="InterPro"/>
</dbReference>
<dbReference type="GO" id="GO:0000049">
    <property type="term" value="F:tRNA binding"/>
    <property type="evidence" value="ECO:0007669"/>
    <property type="project" value="UniProtKB-KW"/>
</dbReference>
<dbReference type="GO" id="GO:0006417">
    <property type="term" value="P:regulation of translation"/>
    <property type="evidence" value="ECO:0007669"/>
    <property type="project" value="UniProtKB-KW"/>
</dbReference>
<dbReference type="GO" id="GO:0006412">
    <property type="term" value="P:translation"/>
    <property type="evidence" value="ECO:0007669"/>
    <property type="project" value="UniProtKB-UniRule"/>
</dbReference>
<dbReference type="CDD" id="cd00403">
    <property type="entry name" value="Ribosomal_L1"/>
    <property type="match status" value="1"/>
</dbReference>
<dbReference type="FunFam" id="3.40.50.790:FF:000005">
    <property type="entry name" value="50S ribosomal protein L1"/>
    <property type="match status" value="1"/>
</dbReference>
<dbReference type="Gene3D" id="3.30.190.20">
    <property type="match status" value="1"/>
</dbReference>
<dbReference type="Gene3D" id="3.40.50.790">
    <property type="match status" value="1"/>
</dbReference>
<dbReference type="HAMAP" id="MF_01318_A">
    <property type="entry name" value="Ribosomal_uL1_A"/>
    <property type="match status" value="1"/>
</dbReference>
<dbReference type="InterPro" id="IPR002143">
    <property type="entry name" value="Ribosomal_uL1"/>
</dbReference>
<dbReference type="InterPro" id="IPR023674">
    <property type="entry name" value="Ribosomal_uL1-like"/>
</dbReference>
<dbReference type="InterPro" id="IPR028364">
    <property type="entry name" value="Ribosomal_uL1/biogenesis"/>
</dbReference>
<dbReference type="InterPro" id="IPR016095">
    <property type="entry name" value="Ribosomal_uL1_3-a/b-sand"/>
</dbReference>
<dbReference type="InterPro" id="IPR023669">
    <property type="entry name" value="Ribosomal_uL1_arc"/>
</dbReference>
<dbReference type="NCBIfam" id="NF003244">
    <property type="entry name" value="PRK04203.1"/>
    <property type="match status" value="1"/>
</dbReference>
<dbReference type="PANTHER" id="PTHR36427">
    <property type="entry name" value="54S RIBOSOMAL PROTEIN L1, MITOCHONDRIAL"/>
    <property type="match status" value="1"/>
</dbReference>
<dbReference type="PANTHER" id="PTHR36427:SF3">
    <property type="entry name" value="LARGE RIBOSOMAL SUBUNIT PROTEIN UL1M"/>
    <property type="match status" value="1"/>
</dbReference>
<dbReference type="Pfam" id="PF00687">
    <property type="entry name" value="Ribosomal_L1"/>
    <property type="match status" value="1"/>
</dbReference>
<dbReference type="PIRSF" id="PIRSF002155">
    <property type="entry name" value="Ribosomal_L1"/>
    <property type="match status" value="1"/>
</dbReference>
<dbReference type="SUPFAM" id="SSF56808">
    <property type="entry name" value="Ribosomal protein L1"/>
    <property type="match status" value="1"/>
</dbReference>
<organism>
    <name type="scientific">Hyperthermus butylicus (strain DSM 5456 / JCM 9403 / PLM1-5)</name>
    <dbReference type="NCBI Taxonomy" id="415426"/>
    <lineage>
        <taxon>Archaea</taxon>
        <taxon>Thermoproteota</taxon>
        <taxon>Thermoprotei</taxon>
        <taxon>Desulfurococcales</taxon>
        <taxon>Pyrodictiaceae</taxon>
        <taxon>Hyperthermus</taxon>
    </lineage>
</organism>
<comment type="function">
    <text evidence="1">Binds directly to 23S rRNA. Probably involved in E site tRNA release.</text>
</comment>
<comment type="function">
    <text evidence="1">Protein L1 is also a translational repressor protein, it controls the translation of its operon by binding to its mRNA.</text>
</comment>
<comment type="subunit">
    <text evidence="1">Part of the 50S ribosomal subunit.</text>
</comment>
<comment type="similarity">
    <text evidence="1">Belongs to the universal ribosomal protein uL1 family.</text>
</comment>
<gene>
    <name evidence="1" type="primary">rpl1</name>
    <name type="ordered locus">Hbut_1606</name>
</gene>
<reference key="1">
    <citation type="journal article" date="2007" name="Archaea">
        <title>The genome of Hyperthermus butylicus: a sulfur-reducing, peptide fermenting, neutrophilic Crenarchaeote growing up to 108 degrees C.</title>
        <authorList>
            <person name="Bruegger K."/>
            <person name="Chen L."/>
            <person name="Stark M."/>
            <person name="Zibat A."/>
            <person name="Redder P."/>
            <person name="Ruepp A."/>
            <person name="Awayez M."/>
            <person name="She Q."/>
            <person name="Garrett R.A."/>
            <person name="Klenk H.-P."/>
        </authorList>
    </citation>
    <scope>NUCLEOTIDE SEQUENCE [LARGE SCALE GENOMIC DNA]</scope>
    <source>
        <strain>DSM 5456 / JCM 9403 / PLM1-5</strain>
    </source>
</reference>
<evidence type="ECO:0000255" key="1">
    <source>
        <dbReference type="HAMAP-Rule" id="MF_01318"/>
    </source>
</evidence>
<evidence type="ECO:0000305" key="2"/>
<feature type="chain" id="PRO_0000308144" description="Large ribosomal subunit protein uL1">
    <location>
        <begin position="1"/>
        <end position="217"/>
    </location>
</feature>
<accession>A2BN64</accession>
<name>RL1_HYPBU</name>
<keyword id="KW-1185">Reference proteome</keyword>
<keyword id="KW-0678">Repressor</keyword>
<keyword id="KW-0687">Ribonucleoprotein</keyword>
<keyword id="KW-0689">Ribosomal protein</keyword>
<keyword id="KW-0694">RNA-binding</keyword>
<keyword id="KW-0699">rRNA-binding</keyword>
<keyword id="KW-0810">Translation regulation</keyword>
<keyword id="KW-0820">tRNA-binding</keyword>
<proteinExistence type="inferred from homology"/>